<dbReference type="EMBL" id="CP001068">
    <property type="protein sequence ID" value="ACD26121.1"/>
    <property type="molecule type" value="Genomic_DNA"/>
</dbReference>
<dbReference type="SMR" id="B2U9C4"/>
<dbReference type="STRING" id="402626.Rpic_0973"/>
<dbReference type="KEGG" id="rpi:Rpic_0973"/>
<dbReference type="PATRIC" id="fig|402626.5.peg.2174"/>
<dbReference type="eggNOG" id="COG2919">
    <property type="taxonomic scope" value="Bacteria"/>
</dbReference>
<dbReference type="HOGENOM" id="CLU_134863_5_0_4"/>
<dbReference type="GO" id="GO:0032153">
    <property type="term" value="C:cell division site"/>
    <property type="evidence" value="ECO:0007669"/>
    <property type="project" value="UniProtKB-UniRule"/>
</dbReference>
<dbReference type="GO" id="GO:0030428">
    <property type="term" value="C:cell septum"/>
    <property type="evidence" value="ECO:0007669"/>
    <property type="project" value="TreeGrafter"/>
</dbReference>
<dbReference type="GO" id="GO:0005886">
    <property type="term" value="C:plasma membrane"/>
    <property type="evidence" value="ECO:0007669"/>
    <property type="project" value="UniProtKB-SubCell"/>
</dbReference>
<dbReference type="GO" id="GO:0043093">
    <property type="term" value="P:FtsZ-dependent cytokinesis"/>
    <property type="evidence" value="ECO:0007669"/>
    <property type="project" value="UniProtKB-UniRule"/>
</dbReference>
<dbReference type="HAMAP" id="MF_00599">
    <property type="entry name" value="FtsB"/>
    <property type="match status" value="1"/>
</dbReference>
<dbReference type="InterPro" id="IPR023081">
    <property type="entry name" value="Cell_div_FtsB"/>
</dbReference>
<dbReference type="InterPro" id="IPR007060">
    <property type="entry name" value="FtsL/DivIC"/>
</dbReference>
<dbReference type="NCBIfam" id="NF002058">
    <property type="entry name" value="PRK00888.1"/>
    <property type="match status" value="1"/>
</dbReference>
<dbReference type="PANTHER" id="PTHR37485">
    <property type="entry name" value="CELL DIVISION PROTEIN FTSB"/>
    <property type="match status" value="1"/>
</dbReference>
<dbReference type="PANTHER" id="PTHR37485:SF1">
    <property type="entry name" value="CELL DIVISION PROTEIN FTSB"/>
    <property type="match status" value="1"/>
</dbReference>
<dbReference type="Pfam" id="PF04977">
    <property type="entry name" value="DivIC"/>
    <property type="match status" value="1"/>
</dbReference>
<proteinExistence type="inferred from homology"/>
<protein>
    <recommendedName>
        <fullName evidence="1">Cell division protein FtsB</fullName>
    </recommendedName>
</protein>
<feature type="chain" id="PRO_1000129936" description="Cell division protein FtsB">
    <location>
        <begin position="1"/>
        <end position="111"/>
    </location>
</feature>
<feature type="topological domain" description="Cytoplasmic" evidence="1">
    <location>
        <begin position="1"/>
        <end position="3"/>
    </location>
</feature>
<feature type="transmembrane region" description="Helical" evidence="1">
    <location>
        <begin position="4"/>
        <end position="21"/>
    </location>
</feature>
<feature type="topological domain" description="Periplasmic" evidence="1">
    <location>
        <begin position="22"/>
        <end position="111"/>
    </location>
</feature>
<feature type="region of interest" description="Disordered" evidence="2">
    <location>
        <begin position="89"/>
        <end position="111"/>
    </location>
</feature>
<feature type="coiled-coil region" evidence="1">
    <location>
        <begin position="31"/>
        <end position="64"/>
    </location>
</feature>
<evidence type="ECO:0000255" key="1">
    <source>
        <dbReference type="HAMAP-Rule" id="MF_00599"/>
    </source>
</evidence>
<evidence type="ECO:0000256" key="2">
    <source>
        <dbReference type="SAM" id="MobiDB-lite"/>
    </source>
</evidence>
<keyword id="KW-0131">Cell cycle</keyword>
<keyword id="KW-0132">Cell division</keyword>
<keyword id="KW-0997">Cell inner membrane</keyword>
<keyword id="KW-1003">Cell membrane</keyword>
<keyword id="KW-0175">Coiled coil</keyword>
<keyword id="KW-0472">Membrane</keyword>
<keyword id="KW-0812">Transmembrane</keyword>
<keyword id="KW-1133">Transmembrane helix</keyword>
<comment type="function">
    <text evidence="1">Essential cell division protein. May link together the upstream cell division proteins, which are predominantly cytoplasmic, with the downstream cell division proteins, which are predominantly periplasmic.</text>
</comment>
<comment type="subunit">
    <text evidence="1">Part of a complex composed of FtsB, FtsL and FtsQ.</text>
</comment>
<comment type="subcellular location">
    <subcellularLocation>
        <location evidence="1">Cell inner membrane</location>
        <topology evidence="1">Single-pass type II membrane protein</topology>
    </subcellularLocation>
    <text evidence="1">Localizes to the division septum.</text>
</comment>
<comment type="similarity">
    <text evidence="1">Belongs to the FtsB family.</text>
</comment>
<sequence length="111" mass="12559">MRLITLFLLLLLLAIQYPLWLGKGGWLRVWDMQKQVTAQNQRNAELKQRNTKLEGEVKDLKEGTGAIEERARYELGMVKDDEGFVQFVAPAPKTSETPLPPPPPAGQQAHH</sequence>
<organism>
    <name type="scientific">Ralstonia pickettii (strain 12J)</name>
    <dbReference type="NCBI Taxonomy" id="402626"/>
    <lineage>
        <taxon>Bacteria</taxon>
        <taxon>Pseudomonadati</taxon>
        <taxon>Pseudomonadota</taxon>
        <taxon>Betaproteobacteria</taxon>
        <taxon>Burkholderiales</taxon>
        <taxon>Burkholderiaceae</taxon>
        <taxon>Ralstonia</taxon>
    </lineage>
</organism>
<gene>
    <name evidence="1" type="primary">ftsB</name>
    <name type="ordered locus">Rpic_0973</name>
</gene>
<name>FTSB_RALPJ</name>
<accession>B2U9C4</accession>
<reference key="1">
    <citation type="submission" date="2008-05" db="EMBL/GenBank/DDBJ databases">
        <title>Complete sequence of chromosome 1 of Ralstonia pickettii 12J.</title>
        <authorList>
            <person name="Lucas S."/>
            <person name="Copeland A."/>
            <person name="Lapidus A."/>
            <person name="Glavina del Rio T."/>
            <person name="Dalin E."/>
            <person name="Tice H."/>
            <person name="Bruce D."/>
            <person name="Goodwin L."/>
            <person name="Pitluck S."/>
            <person name="Meincke L."/>
            <person name="Brettin T."/>
            <person name="Detter J.C."/>
            <person name="Han C."/>
            <person name="Kuske C.R."/>
            <person name="Schmutz J."/>
            <person name="Larimer F."/>
            <person name="Land M."/>
            <person name="Hauser L."/>
            <person name="Kyrpides N."/>
            <person name="Mikhailova N."/>
            <person name="Marsh T."/>
            <person name="Richardson P."/>
        </authorList>
    </citation>
    <scope>NUCLEOTIDE SEQUENCE [LARGE SCALE GENOMIC DNA]</scope>
    <source>
        <strain>12J</strain>
    </source>
</reference>